<sequence length="145" mass="16257">MYPAHLLLLLAVCVSLLGASAIPPLPLNLAQFALVIKCADKGKRPRWHYMDYGCYCGPGGSGTPIDELDRCCKTHDECYAQAEKKGCYPKLTMYSYYCGGDGPYCNSKTECQRFVCDCDVRAADCFARYPYNNKNYNINTSKRCK</sequence>
<protein>
    <recommendedName>
        <fullName>Basic phospholipase A2 PC14</fullName>
        <shortName>svPLA2</shortName>
        <ecNumber>3.1.1.4</ecNumber>
    </recommendedName>
    <alternativeName>
        <fullName>Phosphatidylcholine 2-acylhydrolase</fullName>
    </alternativeName>
</protein>
<dbReference type="EC" id="3.1.1.4"/>
<dbReference type="EMBL" id="AB062442">
    <property type="protein sequence ID" value="BAB72249.1"/>
    <property type="molecule type" value="Genomic_DNA"/>
</dbReference>
<dbReference type="SMR" id="Q8UUI3"/>
<dbReference type="Proteomes" id="UP000694406">
    <property type="component" value="Unplaced"/>
</dbReference>
<dbReference type="GO" id="GO:0005576">
    <property type="term" value="C:extracellular region"/>
    <property type="evidence" value="ECO:0007669"/>
    <property type="project" value="UniProtKB-SubCell"/>
</dbReference>
<dbReference type="GO" id="GO:0005509">
    <property type="term" value="F:calcium ion binding"/>
    <property type="evidence" value="ECO:0007669"/>
    <property type="project" value="InterPro"/>
</dbReference>
<dbReference type="GO" id="GO:0047498">
    <property type="term" value="F:calcium-dependent phospholipase A2 activity"/>
    <property type="evidence" value="ECO:0007669"/>
    <property type="project" value="TreeGrafter"/>
</dbReference>
<dbReference type="GO" id="GO:0005543">
    <property type="term" value="F:phospholipid binding"/>
    <property type="evidence" value="ECO:0007669"/>
    <property type="project" value="TreeGrafter"/>
</dbReference>
<dbReference type="GO" id="GO:0050482">
    <property type="term" value="P:arachidonate secretion"/>
    <property type="evidence" value="ECO:0007669"/>
    <property type="project" value="InterPro"/>
</dbReference>
<dbReference type="GO" id="GO:0016042">
    <property type="term" value="P:lipid catabolic process"/>
    <property type="evidence" value="ECO:0007669"/>
    <property type="project" value="UniProtKB-KW"/>
</dbReference>
<dbReference type="GO" id="GO:0006644">
    <property type="term" value="P:phospholipid metabolic process"/>
    <property type="evidence" value="ECO:0007669"/>
    <property type="project" value="InterPro"/>
</dbReference>
<dbReference type="CDD" id="cd00125">
    <property type="entry name" value="PLA2c"/>
    <property type="match status" value="1"/>
</dbReference>
<dbReference type="FunFam" id="1.20.90.10:FF:000007">
    <property type="entry name" value="Acidic phospholipase A2"/>
    <property type="match status" value="1"/>
</dbReference>
<dbReference type="Gene3D" id="1.20.90.10">
    <property type="entry name" value="Phospholipase A2 domain"/>
    <property type="match status" value="1"/>
</dbReference>
<dbReference type="InterPro" id="IPR001211">
    <property type="entry name" value="PLipase_A2"/>
</dbReference>
<dbReference type="InterPro" id="IPR033112">
    <property type="entry name" value="PLipase_A2_Asp_AS"/>
</dbReference>
<dbReference type="InterPro" id="IPR016090">
    <property type="entry name" value="PLipase_A2_dom"/>
</dbReference>
<dbReference type="InterPro" id="IPR036444">
    <property type="entry name" value="PLipase_A2_dom_sf"/>
</dbReference>
<dbReference type="InterPro" id="IPR033113">
    <property type="entry name" value="PLipase_A2_His_AS"/>
</dbReference>
<dbReference type="PANTHER" id="PTHR11716:SF51">
    <property type="entry name" value="PHOSPHOLIPASE A2"/>
    <property type="match status" value="1"/>
</dbReference>
<dbReference type="PANTHER" id="PTHR11716">
    <property type="entry name" value="PHOSPHOLIPASE A2 FAMILY MEMBER"/>
    <property type="match status" value="1"/>
</dbReference>
<dbReference type="Pfam" id="PF00068">
    <property type="entry name" value="Phospholip_A2_1"/>
    <property type="match status" value="1"/>
</dbReference>
<dbReference type="PRINTS" id="PR00389">
    <property type="entry name" value="PHPHLIPASEA2"/>
</dbReference>
<dbReference type="SMART" id="SM00085">
    <property type="entry name" value="PA2c"/>
    <property type="match status" value="1"/>
</dbReference>
<dbReference type="SUPFAM" id="SSF48619">
    <property type="entry name" value="Phospholipase A2, PLA2"/>
    <property type="match status" value="1"/>
</dbReference>
<dbReference type="PROSITE" id="PS00119">
    <property type="entry name" value="PA2_ASP"/>
    <property type="match status" value="1"/>
</dbReference>
<dbReference type="PROSITE" id="PS00118">
    <property type="entry name" value="PA2_HIS"/>
    <property type="match status" value="1"/>
</dbReference>
<organism>
    <name type="scientific">Laticauda laticaudata</name>
    <name type="common">Blue-ringed sea krait</name>
    <name type="synonym">Blue-lipped sea krait</name>
    <dbReference type="NCBI Taxonomy" id="8630"/>
    <lineage>
        <taxon>Eukaryota</taxon>
        <taxon>Metazoa</taxon>
        <taxon>Chordata</taxon>
        <taxon>Craniata</taxon>
        <taxon>Vertebrata</taxon>
        <taxon>Euteleostomi</taxon>
        <taxon>Lepidosauria</taxon>
        <taxon>Squamata</taxon>
        <taxon>Bifurcata</taxon>
        <taxon>Unidentata</taxon>
        <taxon>Episquamata</taxon>
        <taxon>Toxicofera</taxon>
        <taxon>Serpentes</taxon>
        <taxon>Colubroidea</taxon>
        <taxon>Elapidae</taxon>
        <taxon>Laticaudinae</taxon>
        <taxon>Laticauda</taxon>
    </lineage>
</organism>
<feature type="signal peptide" evidence="2">
    <location>
        <begin position="1"/>
        <end position="21"/>
    </location>
</feature>
<feature type="propeptide" id="PRO_0000022890" evidence="1">
    <location>
        <begin position="22"/>
        <end position="27"/>
    </location>
</feature>
<feature type="chain" id="PRO_0000022891" description="Basic phospholipase A2 PC14">
    <location>
        <begin position="28"/>
        <end position="145"/>
    </location>
</feature>
<feature type="active site" evidence="1">
    <location>
        <position position="75"/>
    </location>
</feature>
<feature type="active site" evidence="1">
    <location>
        <position position="119"/>
    </location>
</feature>
<feature type="binding site" evidence="1">
    <location>
        <position position="55"/>
    </location>
    <ligand>
        <name>Ca(2+)</name>
        <dbReference type="ChEBI" id="CHEBI:29108"/>
    </ligand>
</feature>
<feature type="binding site" evidence="1">
    <location>
        <position position="57"/>
    </location>
    <ligand>
        <name>Ca(2+)</name>
        <dbReference type="ChEBI" id="CHEBI:29108"/>
    </ligand>
</feature>
<feature type="binding site" evidence="1">
    <location>
        <position position="59"/>
    </location>
    <ligand>
        <name>Ca(2+)</name>
        <dbReference type="ChEBI" id="CHEBI:29108"/>
    </ligand>
</feature>
<feature type="binding site" evidence="1">
    <location>
        <position position="76"/>
    </location>
    <ligand>
        <name>Ca(2+)</name>
        <dbReference type="ChEBI" id="CHEBI:29108"/>
    </ligand>
</feature>
<feature type="disulfide bond" evidence="1">
    <location>
        <begin position="38"/>
        <end position="98"/>
    </location>
</feature>
<feature type="disulfide bond" evidence="1">
    <location>
        <begin position="54"/>
        <end position="144"/>
    </location>
</feature>
<feature type="disulfide bond" evidence="1">
    <location>
        <begin position="56"/>
        <end position="72"/>
    </location>
</feature>
<feature type="disulfide bond" evidence="1">
    <location>
        <begin position="71"/>
        <end position="125"/>
    </location>
</feature>
<feature type="disulfide bond" evidence="1">
    <location>
        <begin position="78"/>
        <end position="118"/>
    </location>
</feature>
<feature type="disulfide bond" evidence="1">
    <location>
        <begin position="87"/>
        <end position="111"/>
    </location>
</feature>
<feature type="disulfide bond" evidence="1">
    <location>
        <begin position="105"/>
        <end position="116"/>
    </location>
</feature>
<evidence type="ECO:0000250" key="1"/>
<evidence type="ECO:0000255" key="2"/>
<evidence type="ECO:0000255" key="3">
    <source>
        <dbReference type="PROSITE-ProRule" id="PRU10035"/>
    </source>
</evidence>
<evidence type="ECO:0000255" key="4">
    <source>
        <dbReference type="PROSITE-ProRule" id="PRU10036"/>
    </source>
</evidence>
<evidence type="ECO:0000305" key="5"/>
<proteinExistence type="inferred from homology"/>
<name>PA2BE_LATLA</name>
<accession>Q8UUI3</accession>
<comment type="function">
    <text evidence="1">PLA2 catalyzes the calcium-dependent hydrolysis of the 2-acyl groups in 3-sn-phosphoglycerides.</text>
</comment>
<comment type="catalytic activity">
    <reaction evidence="3 4">
        <text>a 1,2-diacyl-sn-glycero-3-phosphocholine + H2O = a 1-acyl-sn-glycero-3-phosphocholine + a fatty acid + H(+)</text>
        <dbReference type="Rhea" id="RHEA:15801"/>
        <dbReference type="ChEBI" id="CHEBI:15377"/>
        <dbReference type="ChEBI" id="CHEBI:15378"/>
        <dbReference type="ChEBI" id="CHEBI:28868"/>
        <dbReference type="ChEBI" id="CHEBI:57643"/>
        <dbReference type="ChEBI" id="CHEBI:58168"/>
        <dbReference type="EC" id="3.1.1.4"/>
    </reaction>
</comment>
<comment type="cofactor">
    <cofactor evidence="1">
        <name>Ca(2+)</name>
        <dbReference type="ChEBI" id="CHEBI:29108"/>
    </cofactor>
    <text evidence="1">Binds 1 Ca(2+) ion.</text>
</comment>
<comment type="subcellular location">
    <subcellularLocation>
        <location evidence="1">Secreted</location>
    </subcellularLocation>
</comment>
<comment type="similarity">
    <text evidence="5">Belongs to the phospholipase A2 family. Group I subfamily. D49 sub-subfamily.</text>
</comment>
<keyword id="KW-0106">Calcium</keyword>
<keyword id="KW-1015">Disulfide bond</keyword>
<keyword id="KW-0378">Hydrolase</keyword>
<keyword id="KW-0442">Lipid degradation</keyword>
<keyword id="KW-0443">Lipid metabolism</keyword>
<keyword id="KW-0479">Metal-binding</keyword>
<keyword id="KW-1185">Reference proteome</keyword>
<keyword id="KW-0964">Secreted</keyword>
<keyword id="KW-0732">Signal</keyword>
<reference key="1">
    <citation type="journal article" date="2002" name="Toxicon">
        <title>A comparative analysis of invaded sequences from group IA phospholipase A(2) genes provides evidence about the divergence period of genes groups and snake families.</title>
        <authorList>
            <person name="Fujimi T.J."/>
            <person name="Tsuchiya T."/>
            <person name="Tamiya T."/>
        </authorList>
    </citation>
    <scope>NUCLEOTIDE SEQUENCE [GENOMIC DNA]</scope>
    <source>
        <tissue>Liver</tissue>
    </source>
</reference>